<dbReference type="EC" id="7.1.2.2" evidence="1"/>
<dbReference type="EMBL" id="CP000252">
    <property type="protein sequence ID" value="ABC78995.1"/>
    <property type="molecule type" value="Genomic_DNA"/>
</dbReference>
<dbReference type="RefSeq" id="WP_011419009.1">
    <property type="nucleotide sequence ID" value="NC_007759.1"/>
</dbReference>
<dbReference type="SMR" id="Q2LY34"/>
<dbReference type="STRING" id="56780.SYN_02104"/>
<dbReference type="KEGG" id="sat:SYN_02104"/>
<dbReference type="eggNOG" id="COG0056">
    <property type="taxonomic scope" value="Bacteria"/>
</dbReference>
<dbReference type="HOGENOM" id="CLU_010091_2_1_7"/>
<dbReference type="InParanoid" id="Q2LY34"/>
<dbReference type="OrthoDB" id="9803053at2"/>
<dbReference type="Proteomes" id="UP000001933">
    <property type="component" value="Chromosome"/>
</dbReference>
<dbReference type="GO" id="GO:0005886">
    <property type="term" value="C:plasma membrane"/>
    <property type="evidence" value="ECO:0007669"/>
    <property type="project" value="UniProtKB-SubCell"/>
</dbReference>
<dbReference type="GO" id="GO:0045259">
    <property type="term" value="C:proton-transporting ATP synthase complex"/>
    <property type="evidence" value="ECO:0007669"/>
    <property type="project" value="UniProtKB-KW"/>
</dbReference>
<dbReference type="GO" id="GO:0043531">
    <property type="term" value="F:ADP binding"/>
    <property type="evidence" value="ECO:0007669"/>
    <property type="project" value="TreeGrafter"/>
</dbReference>
<dbReference type="GO" id="GO:0005524">
    <property type="term" value="F:ATP binding"/>
    <property type="evidence" value="ECO:0007669"/>
    <property type="project" value="UniProtKB-UniRule"/>
</dbReference>
<dbReference type="GO" id="GO:0046933">
    <property type="term" value="F:proton-transporting ATP synthase activity, rotational mechanism"/>
    <property type="evidence" value="ECO:0007669"/>
    <property type="project" value="UniProtKB-UniRule"/>
</dbReference>
<dbReference type="CDD" id="cd18113">
    <property type="entry name" value="ATP-synt_F1_alpha_C"/>
    <property type="match status" value="1"/>
</dbReference>
<dbReference type="CDD" id="cd18116">
    <property type="entry name" value="ATP-synt_F1_alpha_N"/>
    <property type="match status" value="1"/>
</dbReference>
<dbReference type="CDD" id="cd01132">
    <property type="entry name" value="F1-ATPase_alpha_CD"/>
    <property type="match status" value="1"/>
</dbReference>
<dbReference type="FunFam" id="3.40.50.300:FF:000002">
    <property type="entry name" value="ATP synthase subunit alpha"/>
    <property type="match status" value="1"/>
</dbReference>
<dbReference type="Gene3D" id="2.40.30.20">
    <property type="match status" value="1"/>
</dbReference>
<dbReference type="Gene3D" id="1.20.150.20">
    <property type="entry name" value="ATP synthase alpha/beta chain, C-terminal domain"/>
    <property type="match status" value="1"/>
</dbReference>
<dbReference type="Gene3D" id="3.40.50.300">
    <property type="entry name" value="P-loop containing nucleotide triphosphate hydrolases"/>
    <property type="match status" value="1"/>
</dbReference>
<dbReference type="HAMAP" id="MF_01346">
    <property type="entry name" value="ATP_synth_alpha_bact"/>
    <property type="match status" value="1"/>
</dbReference>
<dbReference type="InterPro" id="IPR017710">
    <property type="entry name" value="Alt_ATP_synth_F1_asu"/>
</dbReference>
<dbReference type="InterPro" id="IPR023366">
    <property type="entry name" value="ATP_synth_asu-like_sf"/>
</dbReference>
<dbReference type="InterPro" id="IPR000793">
    <property type="entry name" value="ATP_synth_asu_C"/>
</dbReference>
<dbReference type="InterPro" id="IPR038376">
    <property type="entry name" value="ATP_synth_asu_C_sf"/>
</dbReference>
<dbReference type="InterPro" id="IPR033732">
    <property type="entry name" value="ATP_synth_F1_a_nt-bd_dom"/>
</dbReference>
<dbReference type="InterPro" id="IPR005294">
    <property type="entry name" value="ATP_synth_F1_asu"/>
</dbReference>
<dbReference type="InterPro" id="IPR020003">
    <property type="entry name" value="ATPase_a/bsu_AS"/>
</dbReference>
<dbReference type="InterPro" id="IPR004100">
    <property type="entry name" value="ATPase_F1/V1/A1_a/bsu_N"/>
</dbReference>
<dbReference type="InterPro" id="IPR036121">
    <property type="entry name" value="ATPase_F1/V1/A1_a/bsu_N_sf"/>
</dbReference>
<dbReference type="InterPro" id="IPR000194">
    <property type="entry name" value="ATPase_F1/V1/A1_a/bsu_nucl-bd"/>
</dbReference>
<dbReference type="InterPro" id="IPR027417">
    <property type="entry name" value="P-loop_NTPase"/>
</dbReference>
<dbReference type="NCBIfam" id="TIGR03324">
    <property type="entry name" value="alt_F1F0_F1_al"/>
    <property type="match status" value="1"/>
</dbReference>
<dbReference type="NCBIfam" id="TIGR00962">
    <property type="entry name" value="atpA"/>
    <property type="match status" value="1"/>
</dbReference>
<dbReference type="NCBIfam" id="NF009884">
    <property type="entry name" value="PRK13343.1"/>
    <property type="match status" value="1"/>
</dbReference>
<dbReference type="PANTHER" id="PTHR48082">
    <property type="entry name" value="ATP SYNTHASE SUBUNIT ALPHA, MITOCHONDRIAL"/>
    <property type="match status" value="1"/>
</dbReference>
<dbReference type="PANTHER" id="PTHR48082:SF2">
    <property type="entry name" value="ATP SYNTHASE SUBUNIT ALPHA, MITOCHONDRIAL"/>
    <property type="match status" value="1"/>
</dbReference>
<dbReference type="Pfam" id="PF00006">
    <property type="entry name" value="ATP-synt_ab"/>
    <property type="match status" value="1"/>
</dbReference>
<dbReference type="Pfam" id="PF00306">
    <property type="entry name" value="ATP-synt_ab_C"/>
    <property type="match status" value="1"/>
</dbReference>
<dbReference type="Pfam" id="PF02874">
    <property type="entry name" value="ATP-synt_ab_N"/>
    <property type="match status" value="1"/>
</dbReference>
<dbReference type="SUPFAM" id="SSF47917">
    <property type="entry name" value="C-terminal domain of alpha and beta subunits of F1 ATP synthase"/>
    <property type="match status" value="1"/>
</dbReference>
<dbReference type="SUPFAM" id="SSF50615">
    <property type="entry name" value="N-terminal domain of alpha and beta subunits of F1 ATP synthase"/>
    <property type="match status" value="1"/>
</dbReference>
<dbReference type="SUPFAM" id="SSF52540">
    <property type="entry name" value="P-loop containing nucleoside triphosphate hydrolases"/>
    <property type="match status" value="1"/>
</dbReference>
<dbReference type="PROSITE" id="PS00152">
    <property type="entry name" value="ATPASE_ALPHA_BETA"/>
    <property type="match status" value="1"/>
</dbReference>
<reference key="1">
    <citation type="journal article" date="2007" name="Proc. Natl. Acad. Sci. U.S.A.">
        <title>The genome of Syntrophus aciditrophicus: life at the thermodynamic limit of microbial growth.</title>
        <authorList>
            <person name="McInerney M.J."/>
            <person name="Rohlin L."/>
            <person name="Mouttaki H."/>
            <person name="Kim U."/>
            <person name="Krupp R.S."/>
            <person name="Rios-Hernandez L."/>
            <person name="Sieber J."/>
            <person name="Struchtemeyer C.G."/>
            <person name="Bhattacharyya A."/>
            <person name="Campbell J.W."/>
            <person name="Gunsalus R.P."/>
        </authorList>
    </citation>
    <scope>NUCLEOTIDE SEQUENCE [LARGE SCALE GENOMIC DNA]</scope>
    <source>
        <strain>SB</strain>
    </source>
</reference>
<organism>
    <name type="scientific">Syntrophus aciditrophicus (strain SB)</name>
    <dbReference type="NCBI Taxonomy" id="56780"/>
    <lineage>
        <taxon>Bacteria</taxon>
        <taxon>Pseudomonadati</taxon>
        <taxon>Thermodesulfobacteriota</taxon>
        <taxon>Syntrophia</taxon>
        <taxon>Syntrophales</taxon>
        <taxon>Syntrophaceae</taxon>
        <taxon>Syntrophus</taxon>
    </lineage>
</organism>
<sequence>MNRDMPSGRELKSFLEQTFSTLDAVLSGQNARLQEKEVGTVSFVGQGIVRASGLPHVRSEELVVFPGNLLGLVFNVDLDEIGIITLDHTEDISAGSAVRRTGRVLDVPVGEALLGRVLDPMGRPLDNRGEVAAARRLPLEREAPAVMDRAPVSVPLQTGIKVIDSLIAIGRGQRELILGDRQTGKTAIILDTIINQHDKNVICIYCAIGKQSADTARVVSVLESFRTLPYCIIVVAAGEDPPGLQYIAPYAATSMGEYFMKRGKDVLVIYDDLTRHARAYRELSLLLRRPPGREAYPGDIFYIHARMLERATHLREELGGGSLTAIPIIETEAQDISAYIPTNLISITDGQIYLSSRLFQKGILPAIDVGKSVSRVGGKTQLPAYRTVAGDLRLSYSQFEELETFSRFGTRLDEETRRKLERGRRVREILKQKQYNPLCVADQIAALLSVTSGALDGISLENIGAAEKRIQEAVHVQLSDLCDRIKKGEPLTVHDRKTLLDAARSAVAAEPERHRNADS</sequence>
<proteinExistence type="inferred from homology"/>
<keyword id="KW-0066">ATP synthesis</keyword>
<keyword id="KW-0067">ATP-binding</keyword>
<keyword id="KW-0997">Cell inner membrane</keyword>
<keyword id="KW-1003">Cell membrane</keyword>
<keyword id="KW-0139">CF(1)</keyword>
<keyword id="KW-0375">Hydrogen ion transport</keyword>
<keyword id="KW-0406">Ion transport</keyword>
<keyword id="KW-0472">Membrane</keyword>
<keyword id="KW-0547">Nucleotide-binding</keyword>
<keyword id="KW-1185">Reference proteome</keyword>
<keyword id="KW-1278">Translocase</keyword>
<keyword id="KW-0813">Transport</keyword>
<gene>
    <name evidence="1" type="primary">atpA2</name>
    <name type="ordered locus">SYNAS_31160</name>
    <name type="ORF">SYN_02104</name>
</gene>
<feature type="chain" id="PRO_0000238384" description="ATP synthase subunit alpha 2">
    <location>
        <begin position="1"/>
        <end position="519"/>
    </location>
</feature>
<feature type="binding site" evidence="1">
    <location>
        <begin position="179"/>
        <end position="186"/>
    </location>
    <ligand>
        <name>ATP</name>
        <dbReference type="ChEBI" id="CHEBI:30616"/>
    </ligand>
</feature>
<feature type="site" description="Required for activity" evidence="1">
    <location>
        <position position="372"/>
    </location>
</feature>
<protein>
    <recommendedName>
        <fullName evidence="1">ATP synthase subunit alpha 2</fullName>
        <ecNumber evidence="1">7.1.2.2</ecNumber>
    </recommendedName>
    <alternativeName>
        <fullName evidence="1">ATP synthase F1 sector subunit alpha 2</fullName>
    </alternativeName>
    <alternativeName>
        <fullName evidence="1">F-ATPase subunit alpha 2</fullName>
    </alternativeName>
</protein>
<accession>Q2LY34</accession>
<comment type="function">
    <text evidence="1">Produces ATP from ADP in the presence of a proton gradient across the membrane. The alpha chain is a regulatory subunit.</text>
</comment>
<comment type="catalytic activity">
    <reaction evidence="1">
        <text>ATP + H2O + 4 H(+)(in) = ADP + phosphate + 5 H(+)(out)</text>
        <dbReference type="Rhea" id="RHEA:57720"/>
        <dbReference type="ChEBI" id="CHEBI:15377"/>
        <dbReference type="ChEBI" id="CHEBI:15378"/>
        <dbReference type="ChEBI" id="CHEBI:30616"/>
        <dbReference type="ChEBI" id="CHEBI:43474"/>
        <dbReference type="ChEBI" id="CHEBI:456216"/>
        <dbReference type="EC" id="7.1.2.2"/>
    </reaction>
</comment>
<comment type="subunit">
    <text evidence="1">F-type ATPases have 2 components, CF(1) - the catalytic core - and CF(0) - the membrane proton channel. CF(1) has five subunits: alpha(3), beta(3), gamma(1), delta(1), epsilon(1). CF(0) has three main subunits: a(1), b(2) and c(9-12). The alpha and beta chains form an alternating ring which encloses part of the gamma chain. CF(1) is attached to CF(0) by a central stalk formed by the gamma and epsilon chains, while a peripheral stalk is formed by the delta and b chains.</text>
</comment>
<comment type="subcellular location">
    <subcellularLocation>
        <location evidence="1">Cell inner membrane</location>
        <topology evidence="1">Peripheral membrane protein</topology>
    </subcellularLocation>
</comment>
<comment type="similarity">
    <text evidence="1">Belongs to the ATPase alpha/beta chains family.</text>
</comment>
<evidence type="ECO:0000255" key="1">
    <source>
        <dbReference type="HAMAP-Rule" id="MF_01346"/>
    </source>
</evidence>
<name>ATPA2_SYNAS</name>